<evidence type="ECO:0000255" key="1">
    <source>
        <dbReference type="HAMAP-Rule" id="MF_01013"/>
    </source>
</evidence>
<gene>
    <name evidence="1" type="primary">hisF</name>
    <name type="ordered locus">Bcenmc03_0410</name>
</gene>
<proteinExistence type="inferred from homology"/>
<name>HIS6_BURO0</name>
<organism>
    <name type="scientific">Burkholderia orbicola (strain MC0-3)</name>
    <dbReference type="NCBI Taxonomy" id="406425"/>
    <lineage>
        <taxon>Bacteria</taxon>
        <taxon>Pseudomonadati</taxon>
        <taxon>Pseudomonadota</taxon>
        <taxon>Betaproteobacteria</taxon>
        <taxon>Burkholderiales</taxon>
        <taxon>Burkholderiaceae</taxon>
        <taxon>Burkholderia</taxon>
        <taxon>Burkholderia cepacia complex</taxon>
        <taxon>Burkholderia orbicola</taxon>
    </lineage>
</organism>
<reference key="1">
    <citation type="submission" date="2008-02" db="EMBL/GenBank/DDBJ databases">
        <title>Complete sequence of chromosome 1 of Burkholderia cenocepacia MC0-3.</title>
        <authorList>
            <person name="Copeland A."/>
            <person name="Lucas S."/>
            <person name="Lapidus A."/>
            <person name="Barry K."/>
            <person name="Bruce D."/>
            <person name="Goodwin L."/>
            <person name="Glavina del Rio T."/>
            <person name="Dalin E."/>
            <person name="Tice H."/>
            <person name="Pitluck S."/>
            <person name="Chain P."/>
            <person name="Malfatti S."/>
            <person name="Shin M."/>
            <person name="Vergez L."/>
            <person name="Schmutz J."/>
            <person name="Larimer F."/>
            <person name="Land M."/>
            <person name="Hauser L."/>
            <person name="Kyrpides N."/>
            <person name="Mikhailova N."/>
            <person name="Tiedje J."/>
            <person name="Richardson P."/>
        </authorList>
    </citation>
    <scope>NUCLEOTIDE SEQUENCE [LARGE SCALE GENOMIC DNA]</scope>
    <source>
        <strain>MC0-3</strain>
    </source>
</reference>
<feature type="chain" id="PRO_1000134973" description="Imidazole glycerol phosphate synthase subunit HisF">
    <location>
        <begin position="1"/>
        <end position="257"/>
    </location>
</feature>
<feature type="active site" evidence="1">
    <location>
        <position position="12"/>
    </location>
</feature>
<feature type="active site" evidence="1">
    <location>
        <position position="131"/>
    </location>
</feature>
<sequence length="257" mass="27277">MALAKRIIPCLDVTAGRVVKGVNFVELRDAGDPVEIARRYDDQGADELTFLDITATSDQRDLILPIIEAVASQVFIPLTVGGGVRAVEDVRRLLNAGADKVSMNSSAVANPQLVRDAADKYGSQCIVVAIDAKRVSADGETPRWEVFTHGGRKNTGLDAIEWARKMAELGAGEILLTSMDRDGTKSGFDLALTRGVSDAVPVPVIASGGVGSLQHLADGIKDGRADAVLAASIFHYGEHTVGEAKRFMSDQGIPVRL</sequence>
<dbReference type="EC" id="4.3.2.10" evidence="1"/>
<dbReference type="EMBL" id="CP000958">
    <property type="protein sequence ID" value="ACA89590.1"/>
    <property type="molecule type" value="Genomic_DNA"/>
</dbReference>
<dbReference type="RefSeq" id="WP_006751800.1">
    <property type="nucleotide sequence ID" value="NC_010508.1"/>
</dbReference>
<dbReference type="SMR" id="B1JUA5"/>
<dbReference type="GeneID" id="93084237"/>
<dbReference type="KEGG" id="bcm:Bcenmc03_0410"/>
<dbReference type="HOGENOM" id="CLU_048577_4_0_4"/>
<dbReference type="UniPathway" id="UPA00031">
    <property type="reaction ID" value="UER00010"/>
</dbReference>
<dbReference type="Proteomes" id="UP000002169">
    <property type="component" value="Chromosome 1"/>
</dbReference>
<dbReference type="GO" id="GO:0005737">
    <property type="term" value="C:cytoplasm"/>
    <property type="evidence" value="ECO:0007669"/>
    <property type="project" value="UniProtKB-SubCell"/>
</dbReference>
<dbReference type="GO" id="GO:0000107">
    <property type="term" value="F:imidazoleglycerol-phosphate synthase activity"/>
    <property type="evidence" value="ECO:0007669"/>
    <property type="project" value="UniProtKB-UniRule"/>
</dbReference>
<dbReference type="GO" id="GO:0016829">
    <property type="term" value="F:lyase activity"/>
    <property type="evidence" value="ECO:0007669"/>
    <property type="project" value="UniProtKB-KW"/>
</dbReference>
<dbReference type="GO" id="GO:0000105">
    <property type="term" value="P:L-histidine biosynthetic process"/>
    <property type="evidence" value="ECO:0007669"/>
    <property type="project" value="UniProtKB-UniRule"/>
</dbReference>
<dbReference type="CDD" id="cd04731">
    <property type="entry name" value="HisF"/>
    <property type="match status" value="1"/>
</dbReference>
<dbReference type="FunFam" id="3.20.20.70:FF:000006">
    <property type="entry name" value="Imidazole glycerol phosphate synthase subunit HisF"/>
    <property type="match status" value="1"/>
</dbReference>
<dbReference type="Gene3D" id="3.20.20.70">
    <property type="entry name" value="Aldolase class I"/>
    <property type="match status" value="1"/>
</dbReference>
<dbReference type="HAMAP" id="MF_01013">
    <property type="entry name" value="HisF"/>
    <property type="match status" value="1"/>
</dbReference>
<dbReference type="InterPro" id="IPR013785">
    <property type="entry name" value="Aldolase_TIM"/>
</dbReference>
<dbReference type="InterPro" id="IPR006062">
    <property type="entry name" value="His_biosynth"/>
</dbReference>
<dbReference type="InterPro" id="IPR004651">
    <property type="entry name" value="HisF"/>
</dbReference>
<dbReference type="InterPro" id="IPR050064">
    <property type="entry name" value="IGPS_HisA/HisF"/>
</dbReference>
<dbReference type="InterPro" id="IPR011060">
    <property type="entry name" value="RibuloseP-bd_barrel"/>
</dbReference>
<dbReference type="NCBIfam" id="TIGR00735">
    <property type="entry name" value="hisF"/>
    <property type="match status" value="1"/>
</dbReference>
<dbReference type="PANTHER" id="PTHR21235:SF2">
    <property type="entry name" value="IMIDAZOLE GLYCEROL PHOSPHATE SYNTHASE HISHF"/>
    <property type="match status" value="1"/>
</dbReference>
<dbReference type="PANTHER" id="PTHR21235">
    <property type="entry name" value="IMIDAZOLE GLYCEROL PHOSPHATE SYNTHASE SUBUNIT HISF/H IGP SYNTHASE SUBUNIT HISF/H"/>
    <property type="match status" value="1"/>
</dbReference>
<dbReference type="Pfam" id="PF00977">
    <property type="entry name" value="His_biosynth"/>
    <property type="match status" value="1"/>
</dbReference>
<dbReference type="SUPFAM" id="SSF51366">
    <property type="entry name" value="Ribulose-phoshate binding barrel"/>
    <property type="match status" value="1"/>
</dbReference>
<keyword id="KW-0028">Amino-acid biosynthesis</keyword>
<keyword id="KW-0963">Cytoplasm</keyword>
<keyword id="KW-0368">Histidine biosynthesis</keyword>
<keyword id="KW-0456">Lyase</keyword>
<protein>
    <recommendedName>
        <fullName evidence="1">Imidazole glycerol phosphate synthase subunit HisF</fullName>
        <ecNumber evidence="1">4.3.2.10</ecNumber>
    </recommendedName>
    <alternativeName>
        <fullName evidence="1">IGP synthase cyclase subunit</fullName>
    </alternativeName>
    <alternativeName>
        <fullName evidence="1">IGP synthase subunit HisF</fullName>
    </alternativeName>
    <alternativeName>
        <fullName evidence="1">ImGP synthase subunit HisF</fullName>
        <shortName evidence="1">IGPS subunit HisF</shortName>
    </alternativeName>
</protein>
<comment type="function">
    <text evidence="1">IGPS catalyzes the conversion of PRFAR and glutamine to IGP, AICAR and glutamate. The HisF subunit catalyzes the cyclization activity that produces IGP and AICAR from PRFAR using the ammonia provided by the HisH subunit.</text>
</comment>
<comment type="catalytic activity">
    <reaction evidence="1">
        <text>5-[(5-phospho-1-deoxy-D-ribulos-1-ylimino)methylamino]-1-(5-phospho-beta-D-ribosyl)imidazole-4-carboxamide + L-glutamine = D-erythro-1-(imidazol-4-yl)glycerol 3-phosphate + 5-amino-1-(5-phospho-beta-D-ribosyl)imidazole-4-carboxamide + L-glutamate + H(+)</text>
        <dbReference type="Rhea" id="RHEA:24793"/>
        <dbReference type="ChEBI" id="CHEBI:15378"/>
        <dbReference type="ChEBI" id="CHEBI:29985"/>
        <dbReference type="ChEBI" id="CHEBI:58278"/>
        <dbReference type="ChEBI" id="CHEBI:58359"/>
        <dbReference type="ChEBI" id="CHEBI:58475"/>
        <dbReference type="ChEBI" id="CHEBI:58525"/>
        <dbReference type="EC" id="4.3.2.10"/>
    </reaction>
</comment>
<comment type="pathway">
    <text evidence="1">Amino-acid biosynthesis; L-histidine biosynthesis; L-histidine from 5-phospho-alpha-D-ribose 1-diphosphate: step 5/9.</text>
</comment>
<comment type="subunit">
    <text evidence="1">Heterodimer of HisH and HisF.</text>
</comment>
<comment type="subcellular location">
    <subcellularLocation>
        <location evidence="1">Cytoplasm</location>
    </subcellularLocation>
</comment>
<comment type="similarity">
    <text evidence="1">Belongs to the HisA/HisF family.</text>
</comment>
<accession>B1JUA5</accession>